<keyword id="KW-0001">2Fe-2S</keyword>
<keyword id="KW-0004">4Fe-4S</keyword>
<keyword id="KW-0408">Iron</keyword>
<keyword id="KW-0411">Iron-sulfur</keyword>
<keyword id="KW-0479">Metal-binding</keyword>
<keyword id="KW-0520">NAD</keyword>
<keyword id="KW-0874">Quinone</keyword>
<keyword id="KW-1278">Translocase</keyword>
<keyword id="KW-0830">Ubiquinone</keyword>
<feature type="initiator methionine" description="Removed" evidence="1">
    <location>
        <position position="1"/>
    </location>
</feature>
<feature type="chain" id="PRO_0000118553" description="NADH-quinone oxidoreductase subunit G">
    <location>
        <begin position="2"/>
        <end position="908"/>
    </location>
</feature>
<feature type="domain" description="2Fe-2S ferredoxin-type" evidence="2">
    <location>
        <begin position="2"/>
        <end position="83"/>
    </location>
</feature>
<feature type="domain" description="4Fe-4S His(Cys)3-ligated-type" evidence="4">
    <location>
        <begin position="83"/>
        <end position="122"/>
    </location>
</feature>
<feature type="domain" description="4Fe-4S Mo/W bis-MGD-type" evidence="3">
    <location>
        <begin position="221"/>
        <end position="277"/>
    </location>
</feature>
<feature type="binding site" evidence="1">
    <location>
        <position position="34"/>
    </location>
    <ligand>
        <name>[2Fe-2S] cluster</name>
        <dbReference type="ChEBI" id="CHEBI:190135"/>
    </ligand>
</feature>
<feature type="binding site" evidence="1">
    <location>
        <position position="45"/>
    </location>
    <ligand>
        <name>[2Fe-2S] cluster</name>
        <dbReference type="ChEBI" id="CHEBI:190135"/>
    </ligand>
</feature>
<feature type="binding site" evidence="1">
    <location>
        <position position="48"/>
    </location>
    <ligand>
        <name>[2Fe-2S] cluster</name>
        <dbReference type="ChEBI" id="CHEBI:190135"/>
    </ligand>
</feature>
<feature type="binding site" evidence="1">
    <location>
        <position position="67"/>
    </location>
    <ligand>
        <name>[2Fe-2S] cluster</name>
        <dbReference type="ChEBI" id="CHEBI:190135"/>
    </ligand>
</feature>
<feature type="binding site" evidence="4">
    <location>
        <position position="99"/>
    </location>
    <ligand>
        <name>[4Fe-4S] cluster</name>
        <dbReference type="ChEBI" id="CHEBI:49883"/>
        <label>1</label>
    </ligand>
</feature>
<feature type="binding site" evidence="4">
    <location>
        <position position="103"/>
    </location>
    <ligand>
        <name>[4Fe-4S] cluster</name>
        <dbReference type="ChEBI" id="CHEBI:49883"/>
        <label>1</label>
    </ligand>
</feature>
<feature type="binding site" evidence="4">
    <location>
        <position position="106"/>
    </location>
    <ligand>
        <name>[4Fe-4S] cluster</name>
        <dbReference type="ChEBI" id="CHEBI:49883"/>
        <label>1</label>
    </ligand>
</feature>
<feature type="binding site" evidence="4">
    <location>
        <position position="112"/>
    </location>
    <ligand>
        <name>[4Fe-4S] cluster</name>
        <dbReference type="ChEBI" id="CHEBI:49883"/>
        <label>1</label>
    </ligand>
</feature>
<feature type="binding site" evidence="1">
    <location>
        <position position="151"/>
    </location>
    <ligand>
        <name>[4Fe-4S] cluster</name>
        <dbReference type="ChEBI" id="CHEBI:49883"/>
        <label>2</label>
    </ligand>
</feature>
<feature type="binding site" evidence="1">
    <location>
        <position position="154"/>
    </location>
    <ligand>
        <name>[4Fe-4S] cluster</name>
        <dbReference type="ChEBI" id="CHEBI:49883"/>
        <label>2</label>
    </ligand>
</feature>
<feature type="binding site" evidence="1">
    <location>
        <position position="157"/>
    </location>
    <ligand>
        <name>[4Fe-4S] cluster</name>
        <dbReference type="ChEBI" id="CHEBI:49883"/>
        <label>2</label>
    </ligand>
</feature>
<feature type="binding site" evidence="1">
    <location>
        <position position="201"/>
    </location>
    <ligand>
        <name>[4Fe-4S] cluster</name>
        <dbReference type="ChEBI" id="CHEBI:49883"/>
        <label>2</label>
    </ligand>
</feature>
<feature type="binding site" evidence="1">
    <location>
        <position position="228"/>
    </location>
    <ligand>
        <name>[4Fe-4S] cluster</name>
        <dbReference type="ChEBI" id="CHEBI:49883"/>
        <label>3</label>
    </ligand>
</feature>
<feature type="binding site" evidence="1">
    <location>
        <position position="231"/>
    </location>
    <ligand>
        <name>[4Fe-4S] cluster</name>
        <dbReference type="ChEBI" id="CHEBI:49883"/>
        <label>3</label>
    </ligand>
</feature>
<feature type="binding site" evidence="1">
    <location>
        <position position="235"/>
    </location>
    <ligand>
        <name>[4Fe-4S] cluster</name>
        <dbReference type="ChEBI" id="CHEBI:49883"/>
        <label>3</label>
    </ligand>
</feature>
<feature type="binding site" evidence="1">
    <location>
        <position position="263"/>
    </location>
    <ligand>
        <name>[4Fe-4S] cluster</name>
        <dbReference type="ChEBI" id="CHEBI:49883"/>
        <label>3</label>
    </ligand>
</feature>
<feature type="sequence conflict" description="In Ref. 2; AAO68247." evidence="5" ref="2">
    <original>S</original>
    <variation>F</variation>
    <location>
        <position position="859"/>
    </location>
</feature>
<gene>
    <name type="primary">nuoG</name>
    <name type="ordered locus">STY2553</name>
    <name type="ordered locus">t0541</name>
</gene>
<name>NUOG_SALTI</name>
<sequence>MATIHVDGKEYEVNGADNLLQACLSLGLDIPYFCWHPALGSVGACRQCAVKQYQNAEDTRGRLVMSCMTPATDGTFISIDDEEAKQFRESVVEWLMTNHPHDCPVCEEGGNCHLQDMTVMTGHSFRRYRFTKRTHRNQDLGPFISHEMNRCIACYRCVRYYKDYADGTDLGVYGAHDNVYFGRPEDGTLESEFSGNLVEICPTGVFTDKTHSERYNRKWDMQFAPSICQQCSIGCNISPGERYGELRRIENRYNGTVNHYFLCDRGRFGYGYVNLKDRPRQPVQRRGDDFITLNAEQAMQGAADILRQSKKVIGIGSPRASIESNFALRELVGAENFYTGIARGEQERLQLALKVLREGGIYTPALREIESYDAVLVLGEDVTQTGARVALAVRQAVKGKAREMAAAQKVADWQIAAILNIGQRAKHPLFVTNVDDTRLDDIAAWTYRAPVEDQARLGFAIAHALDNTAPAVDGIDSDLQNKIDVIVQALAGAKKPLIISGTNAGSSEVIQAAANVAKALKGRGADVGITMIARSVNSMGLGMMGGGSLDDALGELETGSADAVVVLENDLHRHASATRVNAALAKAPLVMVVDHQRTAIMENAHLVLSAASFAESDGTVINNEGRAQRFFQVYDPAYYDNKTIMLESWRWLHSLHSTVENREVDWTQLDHVIDAVIAAMPQFAGIKDAAPDATFRIRGQKLAREPHRYSGRTAMRANISVHEPRQPQDKDTMFAFSMEGNNQPTAPRSEIPFAWAPGWNSPQAWNKFQDEVGGKLRHGDPGVRLIEATEGGLDYFTTVPASFQAQDGQWRIAPYYHLFGSDELSQRSPVFQSRMPQPYIKLNPADAAKLGVNAGTRVSFSYDGNTVTLPVEISEGLAAGQVGLPMGMPGIAPVLAGARLEDLREAQQ</sequence>
<proteinExistence type="inferred from homology"/>
<comment type="function">
    <text evidence="1">NDH-1 shuttles electrons from NADH, via FMN and iron-sulfur (Fe-S) centers, to quinones in the respiratory chain. The immediate electron acceptor for the enzyme in this species is believed to be ubiquinone. Couples the redox reaction to proton translocation (for every two electrons transferred, four hydrogen ions are translocated across the cytoplasmic membrane), and thus conserves the redox energy in a proton gradient (By similarity).</text>
</comment>
<comment type="catalytic activity">
    <reaction>
        <text>a quinone + NADH + 5 H(+)(in) = a quinol + NAD(+) + 4 H(+)(out)</text>
        <dbReference type="Rhea" id="RHEA:57888"/>
        <dbReference type="ChEBI" id="CHEBI:15378"/>
        <dbReference type="ChEBI" id="CHEBI:24646"/>
        <dbReference type="ChEBI" id="CHEBI:57540"/>
        <dbReference type="ChEBI" id="CHEBI:57945"/>
        <dbReference type="ChEBI" id="CHEBI:132124"/>
    </reaction>
</comment>
<comment type="cofactor">
    <cofactor evidence="1">
        <name>[2Fe-2S] cluster</name>
        <dbReference type="ChEBI" id="CHEBI:190135"/>
    </cofactor>
    <text evidence="1">Binds 1 [2Fe-2S] cluster per subunit.</text>
</comment>
<comment type="cofactor">
    <cofactor evidence="1">
        <name>[4Fe-4S] cluster</name>
        <dbReference type="ChEBI" id="CHEBI:49883"/>
    </cofactor>
    <text evidence="1">Binds 3 [4Fe-4S] clusters per subunit.</text>
</comment>
<comment type="subunit">
    <text evidence="1">Composed of 13 different subunits. Subunits NuoCD, E, F, and G constitute the peripheral sector of the complex (By similarity).</text>
</comment>
<comment type="similarity">
    <text evidence="5">Belongs to the complex I 75 kDa subunit family.</text>
</comment>
<comment type="sequence caution" evidence="5">
    <conflict type="erroneous initiation">
        <sequence resource="EMBL-CDS" id="AAO68247"/>
    </conflict>
</comment>
<comment type="sequence caution" evidence="5">
    <conflict type="erroneous initiation">
        <sequence resource="EMBL-CDS" id="CAD07555"/>
    </conflict>
</comment>
<organism>
    <name type="scientific">Salmonella typhi</name>
    <dbReference type="NCBI Taxonomy" id="90370"/>
    <lineage>
        <taxon>Bacteria</taxon>
        <taxon>Pseudomonadati</taxon>
        <taxon>Pseudomonadota</taxon>
        <taxon>Gammaproteobacteria</taxon>
        <taxon>Enterobacterales</taxon>
        <taxon>Enterobacteriaceae</taxon>
        <taxon>Salmonella</taxon>
    </lineage>
</organism>
<protein>
    <recommendedName>
        <fullName>NADH-quinone oxidoreductase subunit G</fullName>
        <ecNumber>7.1.1.-</ecNumber>
    </recommendedName>
    <alternativeName>
        <fullName>NADH dehydrogenase I subunit G</fullName>
    </alternativeName>
    <alternativeName>
        <fullName>NDH-1 subunit G</fullName>
    </alternativeName>
</protein>
<dbReference type="EC" id="7.1.1.-"/>
<dbReference type="EMBL" id="AL513382">
    <property type="protein sequence ID" value="CAD07555.1"/>
    <property type="status" value="ALT_INIT"/>
    <property type="molecule type" value="Genomic_DNA"/>
</dbReference>
<dbReference type="EMBL" id="AE014613">
    <property type="protein sequence ID" value="AAO68247.1"/>
    <property type="status" value="ALT_INIT"/>
    <property type="molecule type" value="Genomic_DNA"/>
</dbReference>
<dbReference type="PIR" id="AI0796">
    <property type="entry name" value="AI0796"/>
</dbReference>
<dbReference type="RefSeq" id="NP_456865.1">
    <property type="nucleotide sequence ID" value="NC_003198.1"/>
</dbReference>
<dbReference type="RefSeq" id="WP_001518099.1">
    <property type="nucleotide sequence ID" value="NZ_WSUK01000014.1"/>
</dbReference>
<dbReference type="SMR" id="P0A1Y5"/>
<dbReference type="STRING" id="220341.gene:17586452"/>
<dbReference type="KEGG" id="stt:t0541"/>
<dbReference type="KEGG" id="sty:STY2553"/>
<dbReference type="PATRIC" id="fig|220341.7.peg.2583"/>
<dbReference type="eggNOG" id="COG1034">
    <property type="taxonomic scope" value="Bacteria"/>
</dbReference>
<dbReference type="HOGENOM" id="CLU_000422_11_4_6"/>
<dbReference type="OMA" id="GRIVMSC"/>
<dbReference type="OrthoDB" id="9810782at2"/>
<dbReference type="Proteomes" id="UP000000541">
    <property type="component" value="Chromosome"/>
</dbReference>
<dbReference type="Proteomes" id="UP000002670">
    <property type="component" value="Chromosome"/>
</dbReference>
<dbReference type="GO" id="GO:0016020">
    <property type="term" value="C:membrane"/>
    <property type="evidence" value="ECO:0007669"/>
    <property type="project" value="InterPro"/>
</dbReference>
<dbReference type="GO" id="GO:1990204">
    <property type="term" value="C:oxidoreductase complex"/>
    <property type="evidence" value="ECO:0007669"/>
    <property type="project" value="UniProtKB-ARBA"/>
</dbReference>
<dbReference type="GO" id="GO:0051537">
    <property type="term" value="F:2 iron, 2 sulfur cluster binding"/>
    <property type="evidence" value="ECO:0007669"/>
    <property type="project" value="UniProtKB-KW"/>
</dbReference>
<dbReference type="GO" id="GO:0051539">
    <property type="term" value="F:4 iron, 4 sulfur cluster binding"/>
    <property type="evidence" value="ECO:0007669"/>
    <property type="project" value="UniProtKB-KW"/>
</dbReference>
<dbReference type="GO" id="GO:0046872">
    <property type="term" value="F:metal ion binding"/>
    <property type="evidence" value="ECO:0007669"/>
    <property type="project" value="UniProtKB-KW"/>
</dbReference>
<dbReference type="GO" id="GO:0043546">
    <property type="term" value="F:molybdopterin cofactor binding"/>
    <property type="evidence" value="ECO:0007669"/>
    <property type="project" value="InterPro"/>
</dbReference>
<dbReference type="GO" id="GO:0008137">
    <property type="term" value="F:NADH dehydrogenase (ubiquinone) activity"/>
    <property type="evidence" value="ECO:0007669"/>
    <property type="project" value="InterPro"/>
</dbReference>
<dbReference type="GO" id="GO:0048038">
    <property type="term" value="F:quinone binding"/>
    <property type="evidence" value="ECO:0007669"/>
    <property type="project" value="UniProtKB-KW"/>
</dbReference>
<dbReference type="GO" id="GO:0042773">
    <property type="term" value="P:ATP synthesis coupled electron transport"/>
    <property type="evidence" value="ECO:0007669"/>
    <property type="project" value="InterPro"/>
</dbReference>
<dbReference type="CDD" id="cd00207">
    <property type="entry name" value="fer2"/>
    <property type="match status" value="1"/>
</dbReference>
<dbReference type="CDD" id="cd02788">
    <property type="entry name" value="MopB_CT_NDH-1_NuoG2-N7"/>
    <property type="match status" value="1"/>
</dbReference>
<dbReference type="CDD" id="cd02771">
    <property type="entry name" value="MopB_NDH-1_NuoG2-N7"/>
    <property type="match status" value="1"/>
</dbReference>
<dbReference type="FunFam" id="2.20.25.90:FF:000003">
    <property type="entry name" value="NADH-quinone oxidoreductase"/>
    <property type="match status" value="1"/>
</dbReference>
<dbReference type="FunFam" id="2.40.40.20:FF:000014">
    <property type="entry name" value="NADH-quinone oxidoreductase"/>
    <property type="match status" value="1"/>
</dbReference>
<dbReference type="FunFam" id="3.10.20.740:FF:000002">
    <property type="entry name" value="NADH-quinone oxidoreductase"/>
    <property type="match status" value="1"/>
</dbReference>
<dbReference type="FunFam" id="3.30.200.210:FF:000004">
    <property type="entry name" value="NADH-quinone oxidoreductase"/>
    <property type="match status" value="1"/>
</dbReference>
<dbReference type="FunFam" id="3.40.50.740:FF:000006">
    <property type="entry name" value="NADH-quinone oxidoreductase"/>
    <property type="match status" value="1"/>
</dbReference>
<dbReference type="Gene3D" id="2.40.40.20">
    <property type="match status" value="1"/>
</dbReference>
<dbReference type="Gene3D" id="3.10.20.740">
    <property type="match status" value="1"/>
</dbReference>
<dbReference type="Gene3D" id="3.30.200.210">
    <property type="match status" value="1"/>
</dbReference>
<dbReference type="Gene3D" id="3.40.50.740">
    <property type="match status" value="1"/>
</dbReference>
<dbReference type="InterPro" id="IPR036010">
    <property type="entry name" value="2Fe-2S_ferredoxin-like_sf"/>
</dbReference>
<dbReference type="InterPro" id="IPR001041">
    <property type="entry name" value="2Fe-2S_ferredoxin-type"/>
</dbReference>
<dbReference type="InterPro" id="IPR009010">
    <property type="entry name" value="Asp_de-COase-like_dom_sf"/>
</dbReference>
<dbReference type="InterPro" id="IPR006657">
    <property type="entry name" value="MoPterin_dinucl-bd_dom"/>
</dbReference>
<dbReference type="InterPro" id="IPR006656">
    <property type="entry name" value="Mopterin_OxRdtase"/>
</dbReference>
<dbReference type="InterPro" id="IPR006963">
    <property type="entry name" value="Mopterin_OxRdtase_4Fe-4S_dom"/>
</dbReference>
<dbReference type="InterPro" id="IPR000283">
    <property type="entry name" value="NADH_UbQ_OxRdtase_75kDa_su_CS"/>
</dbReference>
<dbReference type="InterPro" id="IPR054351">
    <property type="entry name" value="NADH_UbQ_OxRdtase_ferredoxin"/>
</dbReference>
<dbReference type="InterPro" id="IPR010228">
    <property type="entry name" value="NADH_UbQ_OxRdtase_Gsu"/>
</dbReference>
<dbReference type="InterPro" id="IPR019574">
    <property type="entry name" value="NADH_UbQ_OxRdtase_Gsu_4Fe4S-bd"/>
</dbReference>
<dbReference type="InterPro" id="IPR050123">
    <property type="entry name" value="Prok_molybdopt-oxidoreductase"/>
</dbReference>
<dbReference type="NCBIfam" id="TIGR01973">
    <property type="entry name" value="NuoG"/>
    <property type="match status" value="1"/>
</dbReference>
<dbReference type="PANTHER" id="PTHR43105:SF10">
    <property type="entry name" value="NADH-QUINONE OXIDOREDUCTASE SUBUNIT G"/>
    <property type="match status" value="1"/>
</dbReference>
<dbReference type="PANTHER" id="PTHR43105">
    <property type="entry name" value="RESPIRATORY NITRATE REDUCTASE"/>
    <property type="match status" value="1"/>
</dbReference>
<dbReference type="Pfam" id="PF13510">
    <property type="entry name" value="Fer2_4"/>
    <property type="match status" value="1"/>
</dbReference>
<dbReference type="Pfam" id="PF22117">
    <property type="entry name" value="Fer4_Nqo3"/>
    <property type="match status" value="1"/>
</dbReference>
<dbReference type="Pfam" id="PF04879">
    <property type="entry name" value="Molybdop_Fe4S4"/>
    <property type="match status" value="1"/>
</dbReference>
<dbReference type="Pfam" id="PF00384">
    <property type="entry name" value="Molybdopterin"/>
    <property type="match status" value="1"/>
</dbReference>
<dbReference type="Pfam" id="PF01568">
    <property type="entry name" value="Molydop_binding"/>
    <property type="match status" value="1"/>
</dbReference>
<dbReference type="Pfam" id="PF10588">
    <property type="entry name" value="NADH-G_4Fe-4S_3"/>
    <property type="match status" value="1"/>
</dbReference>
<dbReference type="SMART" id="SM00926">
    <property type="entry name" value="Molybdop_Fe4S4"/>
    <property type="match status" value="1"/>
</dbReference>
<dbReference type="SMART" id="SM00929">
    <property type="entry name" value="NADH-G_4Fe-4S_3"/>
    <property type="match status" value="1"/>
</dbReference>
<dbReference type="SUPFAM" id="SSF54292">
    <property type="entry name" value="2Fe-2S ferredoxin-like"/>
    <property type="match status" value="1"/>
</dbReference>
<dbReference type="SUPFAM" id="SSF54862">
    <property type="entry name" value="4Fe-4S ferredoxins"/>
    <property type="match status" value="1"/>
</dbReference>
<dbReference type="SUPFAM" id="SSF50692">
    <property type="entry name" value="ADC-like"/>
    <property type="match status" value="1"/>
</dbReference>
<dbReference type="SUPFAM" id="SSF53706">
    <property type="entry name" value="Formate dehydrogenase/DMSO reductase, domains 1-3"/>
    <property type="match status" value="1"/>
</dbReference>
<dbReference type="PROSITE" id="PS51085">
    <property type="entry name" value="2FE2S_FER_2"/>
    <property type="match status" value="1"/>
</dbReference>
<dbReference type="PROSITE" id="PS51839">
    <property type="entry name" value="4FE4S_HC3"/>
    <property type="match status" value="1"/>
</dbReference>
<dbReference type="PROSITE" id="PS51669">
    <property type="entry name" value="4FE4S_MOW_BIS_MGD"/>
    <property type="match status" value="1"/>
</dbReference>
<dbReference type="PROSITE" id="PS00641">
    <property type="entry name" value="COMPLEX1_75K_1"/>
    <property type="match status" value="1"/>
</dbReference>
<dbReference type="PROSITE" id="PS00642">
    <property type="entry name" value="COMPLEX1_75K_2"/>
    <property type="match status" value="1"/>
</dbReference>
<dbReference type="PROSITE" id="PS00643">
    <property type="entry name" value="COMPLEX1_75K_3"/>
    <property type="match status" value="1"/>
</dbReference>
<accession>P0A1Y5</accession>
<accession>P33900</accession>
<evidence type="ECO:0000250" key="1"/>
<evidence type="ECO:0000255" key="2">
    <source>
        <dbReference type="PROSITE-ProRule" id="PRU00465"/>
    </source>
</evidence>
<evidence type="ECO:0000255" key="3">
    <source>
        <dbReference type="PROSITE-ProRule" id="PRU01004"/>
    </source>
</evidence>
<evidence type="ECO:0000255" key="4">
    <source>
        <dbReference type="PROSITE-ProRule" id="PRU01184"/>
    </source>
</evidence>
<evidence type="ECO:0000305" key="5"/>
<reference key="1">
    <citation type="journal article" date="2001" name="Nature">
        <title>Complete genome sequence of a multiple drug resistant Salmonella enterica serovar Typhi CT18.</title>
        <authorList>
            <person name="Parkhill J."/>
            <person name="Dougan G."/>
            <person name="James K.D."/>
            <person name="Thomson N.R."/>
            <person name="Pickard D."/>
            <person name="Wain J."/>
            <person name="Churcher C.M."/>
            <person name="Mungall K.L."/>
            <person name="Bentley S.D."/>
            <person name="Holden M.T.G."/>
            <person name="Sebaihia M."/>
            <person name="Baker S."/>
            <person name="Basham D."/>
            <person name="Brooks K."/>
            <person name="Chillingworth T."/>
            <person name="Connerton P."/>
            <person name="Cronin A."/>
            <person name="Davis P."/>
            <person name="Davies R.M."/>
            <person name="Dowd L."/>
            <person name="White N."/>
            <person name="Farrar J."/>
            <person name="Feltwell T."/>
            <person name="Hamlin N."/>
            <person name="Haque A."/>
            <person name="Hien T.T."/>
            <person name="Holroyd S."/>
            <person name="Jagels K."/>
            <person name="Krogh A."/>
            <person name="Larsen T.S."/>
            <person name="Leather S."/>
            <person name="Moule S."/>
            <person name="O'Gaora P."/>
            <person name="Parry C."/>
            <person name="Quail M.A."/>
            <person name="Rutherford K.M."/>
            <person name="Simmonds M."/>
            <person name="Skelton J."/>
            <person name="Stevens K."/>
            <person name="Whitehead S."/>
            <person name="Barrell B.G."/>
        </authorList>
    </citation>
    <scope>NUCLEOTIDE SEQUENCE [LARGE SCALE GENOMIC DNA]</scope>
    <source>
        <strain>CT18</strain>
    </source>
</reference>
<reference key="2">
    <citation type="journal article" date="2003" name="J. Bacteriol.">
        <title>Comparative genomics of Salmonella enterica serovar Typhi strains Ty2 and CT18.</title>
        <authorList>
            <person name="Deng W."/>
            <person name="Liou S.-R."/>
            <person name="Plunkett G. III"/>
            <person name="Mayhew G.F."/>
            <person name="Rose D.J."/>
            <person name="Burland V."/>
            <person name="Kodoyianni V."/>
            <person name="Schwartz D.C."/>
            <person name="Blattner F.R."/>
        </authorList>
    </citation>
    <scope>NUCLEOTIDE SEQUENCE [LARGE SCALE GENOMIC DNA]</scope>
    <source>
        <strain>ATCC 700931 / Ty2</strain>
    </source>
</reference>